<reference key="1">
    <citation type="journal article" date="1975" name="Proc. Natl. Acad. Sci. U.S.A.">
        <title>Diversity of light chain variable region sequences among rabbit antibodies elicited by the same antigens.</title>
        <authorList>
            <person name="Margolies M.N."/>
            <person name="Cannon L.E. III"/>
            <person name="Strosberg A.D."/>
            <person name="Haber E."/>
        </authorList>
    </citation>
    <scope>PROTEIN SEQUENCE</scope>
</reference>
<accession>P01684</accession>
<comment type="miscellaneous">
    <text>This chain was obtained from antibody to type III pneumococci and was isolated from the serum of a single rabbit.</text>
</comment>
<name>KV03_RABIT</name>
<protein>
    <recommendedName>
        <fullName>Ig kappa chain V region 3374</fullName>
    </recommendedName>
</protein>
<sequence>ADIVMTQTPASVSAAVGGTVTINCQASQNIDSWLAWYQQKPGQPPKVLIYRTSTLASGVPSRFKGSRSGTEFTLTISDLECADAATYYCQSYYSISSAFGGGTEVVVKG</sequence>
<organism>
    <name type="scientific">Oryctolagus cuniculus</name>
    <name type="common">Rabbit</name>
    <dbReference type="NCBI Taxonomy" id="9986"/>
    <lineage>
        <taxon>Eukaryota</taxon>
        <taxon>Metazoa</taxon>
        <taxon>Chordata</taxon>
        <taxon>Craniata</taxon>
        <taxon>Vertebrata</taxon>
        <taxon>Euteleostomi</taxon>
        <taxon>Mammalia</taxon>
        <taxon>Eutheria</taxon>
        <taxon>Euarchontoglires</taxon>
        <taxon>Glires</taxon>
        <taxon>Lagomorpha</taxon>
        <taxon>Leporidae</taxon>
        <taxon>Oryctolagus</taxon>
    </lineage>
</organism>
<proteinExistence type="evidence at protein level"/>
<keyword id="KW-1064">Adaptive immunity</keyword>
<keyword id="KW-0903">Direct protein sequencing</keyword>
<keyword id="KW-0391">Immunity</keyword>
<keyword id="KW-1280">Immunoglobulin</keyword>
<keyword id="KW-1185">Reference proteome</keyword>
<dbReference type="PIR" id="A01947">
    <property type="entry name" value="KVRB37"/>
</dbReference>
<dbReference type="SMR" id="P01684"/>
<dbReference type="FunCoup" id="P01684">
    <property type="interactions" value="277"/>
</dbReference>
<dbReference type="InParanoid" id="P01684"/>
<dbReference type="Proteomes" id="UP000001811">
    <property type="component" value="Unplaced"/>
</dbReference>
<dbReference type="GO" id="GO:0019814">
    <property type="term" value="C:immunoglobulin complex"/>
    <property type="evidence" value="ECO:0007669"/>
    <property type="project" value="UniProtKB-KW"/>
</dbReference>
<dbReference type="GO" id="GO:0002250">
    <property type="term" value="P:adaptive immune response"/>
    <property type="evidence" value="ECO:0007669"/>
    <property type="project" value="UniProtKB-KW"/>
</dbReference>
<dbReference type="FunFam" id="2.60.40.10:FF:000212">
    <property type="entry name" value="Immunoglobulin kappa chain variable 12-38"/>
    <property type="match status" value="1"/>
</dbReference>
<dbReference type="Gene3D" id="2.60.40.10">
    <property type="entry name" value="Immunoglobulins"/>
    <property type="match status" value="1"/>
</dbReference>
<dbReference type="InterPro" id="IPR007110">
    <property type="entry name" value="Ig-like_dom"/>
</dbReference>
<dbReference type="InterPro" id="IPR036179">
    <property type="entry name" value="Ig-like_dom_sf"/>
</dbReference>
<dbReference type="InterPro" id="IPR013783">
    <property type="entry name" value="Ig-like_fold"/>
</dbReference>
<dbReference type="InterPro" id="IPR003599">
    <property type="entry name" value="Ig_sub"/>
</dbReference>
<dbReference type="InterPro" id="IPR013106">
    <property type="entry name" value="Ig_V-set"/>
</dbReference>
<dbReference type="InterPro" id="IPR050150">
    <property type="entry name" value="IgV_Light_Chain"/>
</dbReference>
<dbReference type="PANTHER" id="PTHR23267">
    <property type="entry name" value="IMMUNOGLOBULIN LIGHT CHAIN"/>
    <property type="match status" value="1"/>
</dbReference>
<dbReference type="Pfam" id="PF07686">
    <property type="entry name" value="V-set"/>
    <property type="match status" value="1"/>
</dbReference>
<dbReference type="SMART" id="SM00409">
    <property type="entry name" value="IG"/>
    <property type="match status" value="1"/>
</dbReference>
<dbReference type="SMART" id="SM00406">
    <property type="entry name" value="IGv"/>
    <property type="match status" value="1"/>
</dbReference>
<dbReference type="SUPFAM" id="SSF48726">
    <property type="entry name" value="Immunoglobulin"/>
    <property type="match status" value="1"/>
</dbReference>
<dbReference type="PROSITE" id="PS50835">
    <property type="entry name" value="IG_LIKE"/>
    <property type="match status" value="1"/>
</dbReference>
<feature type="chain" id="PRO_0000059722" description="Ig kappa chain V region 3374">
    <location>
        <begin position="1"/>
        <end position="109" status="greater than"/>
    </location>
</feature>
<feature type="region of interest" description="Framework-1">
    <location>
        <begin position="1"/>
        <end position="24"/>
    </location>
</feature>
<feature type="region of interest" description="Complementarity-determining-1">
    <location>
        <begin position="25"/>
        <end position="35"/>
    </location>
</feature>
<feature type="region of interest" description="Framework-2">
    <location>
        <begin position="36"/>
        <end position="50"/>
    </location>
</feature>
<feature type="region of interest" description="Complementarity-determining-2">
    <location>
        <begin position="51"/>
        <end position="57"/>
    </location>
</feature>
<feature type="region of interest" description="Framework-3">
    <location>
        <begin position="58"/>
        <end position="89"/>
    </location>
</feature>
<feature type="region of interest" description="Complementarity-determining-3">
    <location>
        <begin position="90"/>
        <end position="98"/>
    </location>
</feature>
<feature type="region of interest" description="Framework-4">
    <location>
        <begin position="99"/>
        <end position="108"/>
    </location>
</feature>
<feature type="non-terminal residue">
    <location>
        <position position="109"/>
    </location>
</feature>